<reference key="1">
    <citation type="journal article" date="2006" name="PLoS Genet.">
        <title>Comparative genomics of emerging human ehrlichiosis agents.</title>
        <authorList>
            <person name="Dunning Hotopp J.C."/>
            <person name="Lin M."/>
            <person name="Madupu R."/>
            <person name="Crabtree J."/>
            <person name="Angiuoli S.V."/>
            <person name="Eisen J.A."/>
            <person name="Seshadri R."/>
            <person name="Ren Q."/>
            <person name="Wu M."/>
            <person name="Utterback T.R."/>
            <person name="Smith S."/>
            <person name="Lewis M."/>
            <person name="Khouri H."/>
            <person name="Zhang C."/>
            <person name="Niu H."/>
            <person name="Lin Q."/>
            <person name="Ohashi N."/>
            <person name="Zhi N."/>
            <person name="Nelson W.C."/>
            <person name="Brinkac L.M."/>
            <person name="Dodson R.J."/>
            <person name="Rosovitz M.J."/>
            <person name="Sundaram J.P."/>
            <person name="Daugherty S.C."/>
            <person name="Davidsen T."/>
            <person name="Durkin A.S."/>
            <person name="Gwinn M.L."/>
            <person name="Haft D.H."/>
            <person name="Selengut J.D."/>
            <person name="Sullivan S.A."/>
            <person name="Zafar N."/>
            <person name="Zhou L."/>
            <person name="Benahmed F."/>
            <person name="Forberger H."/>
            <person name="Halpin R."/>
            <person name="Mulligan S."/>
            <person name="Robinson J."/>
            <person name="White O."/>
            <person name="Rikihisa Y."/>
            <person name="Tettelin H."/>
        </authorList>
    </citation>
    <scope>NUCLEOTIDE SEQUENCE [LARGE SCALE GENOMIC DNA]</scope>
    <source>
        <strain>ATCC CRL-10679 / Arkansas</strain>
    </source>
</reference>
<comment type="function">
    <text evidence="1">Involved in unsaturated fatty acids biosynthesis. Catalyzes the dehydration of short chain beta-hydroxyacyl-ACPs and long chain saturated and unsaturated beta-hydroxyacyl-ACPs.</text>
</comment>
<comment type="catalytic activity">
    <reaction evidence="1">
        <text>a (3R)-hydroxyacyl-[ACP] = a (2E)-enoyl-[ACP] + H2O</text>
        <dbReference type="Rhea" id="RHEA:13097"/>
        <dbReference type="Rhea" id="RHEA-COMP:9925"/>
        <dbReference type="Rhea" id="RHEA-COMP:9945"/>
        <dbReference type="ChEBI" id="CHEBI:15377"/>
        <dbReference type="ChEBI" id="CHEBI:78784"/>
        <dbReference type="ChEBI" id="CHEBI:78827"/>
        <dbReference type="EC" id="4.2.1.59"/>
    </reaction>
</comment>
<comment type="subcellular location">
    <subcellularLocation>
        <location evidence="1">Cytoplasm</location>
    </subcellularLocation>
</comment>
<comment type="similarity">
    <text evidence="1">Belongs to the thioester dehydratase family. FabZ subfamily.</text>
</comment>
<feature type="chain" id="PRO_0000242889" description="3-hydroxyacyl-[acyl-carrier-protein] dehydratase FabZ">
    <location>
        <begin position="1"/>
        <end position="143"/>
    </location>
</feature>
<feature type="active site" evidence="1">
    <location>
        <position position="49"/>
    </location>
</feature>
<evidence type="ECO:0000255" key="1">
    <source>
        <dbReference type="HAMAP-Rule" id="MF_00406"/>
    </source>
</evidence>
<organism>
    <name type="scientific">Ehrlichia chaffeensis (strain ATCC CRL-10679 / Arkansas)</name>
    <dbReference type="NCBI Taxonomy" id="205920"/>
    <lineage>
        <taxon>Bacteria</taxon>
        <taxon>Pseudomonadati</taxon>
        <taxon>Pseudomonadota</taxon>
        <taxon>Alphaproteobacteria</taxon>
        <taxon>Rickettsiales</taxon>
        <taxon>Anaplasmataceae</taxon>
        <taxon>Ehrlichia</taxon>
    </lineage>
</organism>
<accession>Q2GFC5</accession>
<proteinExistence type="inferred from homology"/>
<dbReference type="EC" id="4.2.1.59" evidence="1"/>
<dbReference type="EMBL" id="CP000236">
    <property type="protein sequence ID" value="ABD45586.1"/>
    <property type="molecule type" value="Genomic_DNA"/>
</dbReference>
<dbReference type="RefSeq" id="WP_006010498.1">
    <property type="nucleotide sequence ID" value="NC_007799.1"/>
</dbReference>
<dbReference type="SMR" id="Q2GFC5"/>
<dbReference type="STRING" id="205920.ECH_1073"/>
<dbReference type="KEGG" id="ech:ECH_1073"/>
<dbReference type="eggNOG" id="COG0764">
    <property type="taxonomic scope" value="Bacteria"/>
</dbReference>
<dbReference type="HOGENOM" id="CLU_078912_1_2_5"/>
<dbReference type="OrthoDB" id="9772788at2"/>
<dbReference type="Proteomes" id="UP000008320">
    <property type="component" value="Chromosome"/>
</dbReference>
<dbReference type="GO" id="GO:0005737">
    <property type="term" value="C:cytoplasm"/>
    <property type="evidence" value="ECO:0007669"/>
    <property type="project" value="UniProtKB-SubCell"/>
</dbReference>
<dbReference type="GO" id="GO:0016020">
    <property type="term" value="C:membrane"/>
    <property type="evidence" value="ECO:0007669"/>
    <property type="project" value="GOC"/>
</dbReference>
<dbReference type="GO" id="GO:0019171">
    <property type="term" value="F:(3R)-hydroxyacyl-[acyl-carrier-protein] dehydratase activity"/>
    <property type="evidence" value="ECO:0007669"/>
    <property type="project" value="UniProtKB-EC"/>
</dbReference>
<dbReference type="GO" id="GO:0006633">
    <property type="term" value="P:fatty acid biosynthetic process"/>
    <property type="evidence" value="ECO:0007669"/>
    <property type="project" value="UniProtKB-UniRule"/>
</dbReference>
<dbReference type="GO" id="GO:0009245">
    <property type="term" value="P:lipid A biosynthetic process"/>
    <property type="evidence" value="ECO:0007669"/>
    <property type="project" value="UniProtKB-UniRule"/>
</dbReference>
<dbReference type="CDD" id="cd01288">
    <property type="entry name" value="FabZ"/>
    <property type="match status" value="1"/>
</dbReference>
<dbReference type="FunFam" id="3.10.129.10:FF:000001">
    <property type="entry name" value="3-hydroxyacyl-[acyl-carrier-protein] dehydratase FabZ"/>
    <property type="match status" value="1"/>
</dbReference>
<dbReference type="Gene3D" id="3.10.129.10">
    <property type="entry name" value="Hotdog Thioesterase"/>
    <property type="match status" value="1"/>
</dbReference>
<dbReference type="HAMAP" id="MF_00406">
    <property type="entry name" value="FabZ"/>
    <property type="match status" value="1"/>
</dbReference>
<dbReference type="InterPro" id="IPR013114">
    <property type="entry name" value="FabA_FabZ"/>
</dbReference>
<dbReference type="InterPro" id="IPR010084">
    <property type="entry name" value="FabZ"/>
</dbReference>
<dbReference type="InterPro" id="IPR029069">
    <property type="entry name" value="HotDog_dom_sf"/>
</dbReference>
<dbReference type="NCBIfam" id="TIGR01750">
    <property type="entry name" value="fabZ"/>
    <property type="match status" value="1"/>
</dbReference>
<dbReference type="NCBIfam" id="NF000582">
    <property type="entry name" value="PRK00006.1"/>
    <property type="match status" value="1"/>
</dbReference>
<dbReference type="PANTHER" id="PTHR30272">
    <property type="entry name" value="3-HYDROXYACYL-[ACYL-CARRIER-PROTEIN] DEHYDRATASE"/>
    <property type="match status" value="1"/>
</dbReference>
<dbReference type="PANTHER" id="PTHR30272:SF1">
    <property type="entry name" value="3-HYDROXYACYL-[ACYL-CARRIER-PROTEIN] DEHYDRATASE"/>
    <property type="match status" value="1"/>
</dbReference>
<dbReference type="Pfam" id="PF07977">
    <property type="entry name" value="FabA"/>
    <property type="match status" value="1"/>
</dbReference>
<dbReference type="SUPFAM" id="SSF54637">
    <property type="entry name" value="Thioesterase/thiol ester dehydrase-isomerase"/>
    <property type="match status" value="1"/>
</dbReference>
<keyword id="KW-0963">Cytoplasm</keyword>
<keyword id="KW-0441">Lipid A biosynthesis</keyword>
<keyword id="KW-0444">Lipid biosynthesis</keyword>
<keyword id="KW-0443">Lipid metabolism</keyword>
<keyword id="KW-0456">Lyase</keyword>
<keyword id="KW-1185">Reference proteome</keyword>
<sequence length="143" mass="15998">MQFNIQEIIKMIPHSYPFLLIDRVTACTPNESVTAIKNVTFNEPFFIGHFPGNPIMPGVLIVEAMAQACIICTMSSMQNYSVYLMSIELAKFRKPVIPGDTLILTVNVVHKRKNTCKFECHAHVEGTLVAEAQILAMTKQNEA</sequence>
<name>FABZ_EHRCR</name>
<protein>
    <recommendedName>
        <fullName evidence="1">3-hydroxyacyl-[acyl-carrier-protein] dehydratase FabZ</fullName>
        <ecNumber evidence="1">4.2.1.59</ecNumber>
    </recommendedName>
    <alternativeName>
        <fullName evidence="1">(3R)-hydroxymyristoyl-[acyl-carrier-protein] dehydratase</fullName>
        <shortName evidence="1">(3R)-hydroxymyristoyl-ACP dehydrase</shortName>
    </alternativeName>
    <alternativeName>
        <fullName evidence="1">Beta-hydroxyacyl-ACP dehydratase</fullName>
    </alternativeName>
</protein>
<gene>
    <name evidence="1" type="primary">fabZ</name>
    <name type="ordered locus">ECH_1073</name>
</gene>